<evidence type="ECO:0000255" key="1">
    <source>
        <dbReference type="HAMAP-Rule" id="MF_00532"/>
    </source>
</evidence>
<evidence type="ECO:0000256" key="2">
    <source>
        <dbReference type="SAM" id="MobiDB-lite"/>
    </source>
</evidence>
<evidence type="ECO:0000305" key="3"/>
<protein>
    <recommendedName>
        <fullName evidence="1">Small ribosomal subunit protein uS9</fullName>
    </recommendedName>
    <alternativeName>
        <fullName evidence="3">30S ribosomal protein S9</fullName>
    </alternativeName>
</protein>
<name>RS9_THEP3</name>
<feature type="chain" id="PRO_1000128189" description="Small ribosomal subunit protein uS9">
    <location>
        <begin position="1"/>
        <end position="130"/>
    </location>
</feature>
<feature type="region of interest" description="Disordered" evidence="2">
    <location>
        <begin position="111"/>
        <end position="130"/>
    </location>
</feature>
<keyword id="KW-1185">Reference proteome</keyword>
<keyword id="KW-0687">Ribonucleoprotein</keyword>
<keyword id="KW-0689">Ribosomal protein</keyword>
<sequence>MATVQYYGTGRRKEAVARVRLMPGKGNIIINNRPLEEYFTLDTLKYTVKQPLILTETIDKFDVYAKVSGGGLTGQAGAVRLGIARALVKVDSELRPILKKAGFLTRDPRMKERRKYGLKKARKAPQFSKR</sequence>
<organism>
    <name type="scientific">Thermoanaerobacter pseudethanolicus (strain ATCC 33223 / 39E)</name>
    <name type="common">Clostridium thermohydrosulfuricum</name>
    <dbReference type="NCBI Taxonomy" id="340099"/>
    <lineage>
        <taxon>Bacteria</taxon>
        <taxon>Bacillati</taxon>
        <taxon>Bacillota</taxon>
        <taxon>Clostridia</taxon>
        <taxon>Thermoanaerobacterales</taxon>
        <taxon>Thermoanaerobacteraceae</taxon>
        <taxon>Thermoanaerobacter</taxon>
    </lineage>
</organism>
<gene>
    <name evidence="1" type="primary">rpsI</name>
    <name type="ordered locus">Teth39_0409</name>
</gene>
<comment type="similarity">
    <text evidence="1">Belongs to the universal ribosomal protein uS9 family.</text>
</comment>
<reference key="1">
    <citation type="submission" date="2008-01" db="EMBL/GenBank/DDBJ databases">
        <title>Complete sequence of Thermoanaerobacter pseudethanolicus 39E.</title>
        <authorList>
            <person name="Copeland A."/>
            <person name="Lucas S."/>
            <person name="Lapidus A."/>
            <person name="Barry K."/>
            <person name="Glavina del Rio T."/>
            <person name="Dalin E."/>
            <person name="Tice H."/>
            <person name="Pitluck S."/>
            <person name="Bruce D."/>
            <person name="Goodwin L."/>
            <person name="Saunders E."/>
            <person name="Brettin T."/>
            <person name="Detter J.C."/>
            <person name="Han C."/>
            <person name="Schmutz J."/>
            <person name="Larimer F."/>
            <person name="Land M."/>
            <person name="Hauser L."/>
            <person name="Kyrpides N."/>
            <person name="Lykidis A."/>
            <person name="Hemme C."/>
            <person name="Fields M.W."/>
            <person name="He Z."/>
            <person name="Zhou J."/>
            <person name="Richardson P."/>
        </authorList>
    </citation>
    <scope>NUCLEOTIDE SEQUENCE [LARGE SCALE GENOMIC DNA]</scope>
    <source>
        <strain>ATCC 33223 / DSM 2355 / 39E</strain>
    </source>
</reference>
<accession>B0KCN5</accession>
<proteinExistence type="inferred from homology"/>
<dbReference type="EMBL" id="CP000924">
    <property type="protein sequence ID" value="ABY94078.1"/>
    <property type="molecule type" value="Genomic_DNA"/>
</dbReference>
<dbReference type="RefSeq" id="WP_003868594.1">
    <property type="nucleotide sequence ID" value="NC_010321.1"/>
</dbReference>
<dbReference type="SMR" id="B0KCN5"/>
<dbReference type="STRING" id="340099.Teth39_0409"/>
<dbReference type="KEGG" id="tpd:Teth39_0409"/>
<dbReference type="eggNOG" id="COG0103">
    <property type="taxonomic scope" value="Bacteria"/>
</dbReference>
<dbReference type="HOGENOM" id="CLU_046483_2_1_9"/>
<dbReference type="Proteomes" id="UP000002156">
    <property type="component" value="Chromosome"/>
</dbReference>
<dbReference type="GO" id="GO:0022627">
    <property type="term" value="C:cytosolic small ribosomal subunit"/>
    <property type="evidence" value="ECO:0007669"/>
    <property type="project" value="TreeGrafter"/>
</dbReference>
<dbReference type="GO" id="GO:0003723">
    <property type="term" value="F:RNA binding"/>
    <property type="evidence" value="ECO:0007669"/>
    <property type="project" value="TreeGrafter"/>
</dbReference>
<dbReference type="GO" id="GO:0003735">
    <property type="term" value="F:structural constituent of ribosome"/>
    <property type="evidence" value="ECO:0007669"/>
    <property type="project" value="InterPro"/>
</dbReference>
<dbReference type="GO" id="GO:0006412">
    <property type="term" value="P:translation"/>
    <property type="evidence" value="ECO:0007669"/>
    <property type="project" value="UniProtKB-UniRule"/>
</dbReference>
<dbReference type="FunFam" id="3.30.230.10:FF:000001">
    <property type="entry name" value="30S ribosomal protein S9"/>
    <property type="match status" value="1"/>
</dbReference>
<dbReference type="Gene3D" id="3.30.230.10">
    <property type="match status" value="1"/>
</dbReference>
<dbReference type="HAMAP" id="MF_00532_B">
    <property type="entry name" value="Ribosomal_uS9_B"/>
    <property type="match status" value="1"/>
</dbReference>
<dbReference type="InterPro" id="IPR020568">
    <property type="entry name" value="Ribosomal_Su5_D2-typ_SF"/>
</dbReference>
<dbReference type="InterPro" id="IPR000754">
    <property type="entry name" value="Ribosomal_uS9"/>
</dbReference>
<dbReference type="InterPro" id="IPR023035">
    <property type="entry name" value="Ribosomal_uS9_bac/plastid"/>
</dbReference>
<dbReference type="InterPro" id="IPR020574">
    <property type="entry name" value="Ribosomal_uS9_CS"/>
</dbReference>
<dbReference type="InterPro" id="IPR014721">
    <property type="entry name" value="Ribsml_uS5_D2-typ_fold_subgr"/>
</dbReference>
<dbReference type="NCBIfam" id="NF001099">
    <property type="entry name" value="PRK00132.1"/>
    <property type="match status" value="1"/>
</dbReference>
<dbReference type="PANTHER" id="PTHR21569">
    <property type="entry name" value="RIBOSOMAL PROTEIN S9"/>
    <property type="match status" value="1"/>
</dbReference>
<dbReference type="PANTHER" id="PTHR21569:SF1">
    <property type="entry name" value="SMALL RIBOSOMAL SUBUNIT PROTEIN US9M"/>
    <property type="match status" value="1"/>
</dbReference>
<dbReference type="Pfam" id="PF00380">
    <property type="entry name" value="Ribosomal_S9"/>
    <property type="match status" value="1"/>
</dbReference>
<dbReference type="SUPFAM" id="SSF54211">
    <property type="entry name" value="Ribosomal protein S5 domain 2-like"/>
    <property type="match status" value="1"/>
</dbReference>
<dbReference type="PROSITE" id="PS00360">
    <property type="entry name" value="RIBOSOMAL_S9"/>
    <property type="match status" value="1"/>
</dbReference>